<organism evidence="7">
    <name type="scientific">Drosophila melanogaster</name>
    <name type="common">Fruit fly</name>
    <dbReference type="NCBI Taxonomy" id="7227"/>
    <lineage>
        <taxon>Eukaryota</taxon>
        <taxon>Metazoa</taxon>
        <taxon>Ecdysozoa</taxon>
        <taxon>Arthropoda</taxon>
        <taxon>Hexapoda</taxon>
        <taxon>Insecta</taxon>
        <taxon>Pterygota</taxon>
        <taxon>Neoptera</taxon>
        <taxon>Endopterygota</taxon>
        <taxon>Diptera</taxon>
        <taxon>Brachycera</taxon>
        <taxon>Muscomorpha</taxon>
        <taxon>Ephydroidea</taxon>
        <taxon>Drosophilidae</taxon>
        <taxon>Drosophila</taxon>
        <taxon>Sophophora</taxon>
    </lineage>
</organism>
<comment type="function">
    <text evidence="5">Stabilizing factor of the core iron-sulfur cluster (ISC) assembly complex that regulates the stability and cysteine desulfurase activity of Nfs1 and participates in the [2Fe-2S] clusters assembly on the scaffolding protein IscU.</text>
</comment>
<comment type="subunit">
    <text evidence="2 5">Component of the mitochondrial core iron-sulfur cluster (ISC) assembly complex at least composed of the cysteine desulfurase Nfs1, the scaffold protein IscU, the accessory protein bcn92/Isd11/Lyrm4, and probably fh/frataxin (PubMed:29491838). Interacts with Nfs1 (PubMed:29491838).</text>
</comment>
<comment type="subcellular location">
    <subcellularLocation>
        <location evidence="2">Mitochondrion</location>
    </subcellularLocation>
</comment>
<comment type="disruption phenotype">
    <text evidence="2">RNAi-mediated knockdown does not affect circadian rhythms.</text>
</comment>
<comment type="similarity">
    <text evidence="4">Belongs to the complex I LYR family.</text>
</comment>
<name>LYRM4_DROME</name>
<sequence length="92" mass="10962">MSTRRQAITLYRNLLRESEKLPSYNFRMYAARKIRDTFRANRSTRDFAEIDRQMAEGQQNLELIRRQVIIGHLYSADKLVIENKKTLKPSDD</sequence>
<evidence type="ECO:0000255" key="1"/>
<evidence type="ECO:0000269" key="2">
    <source>
    </source>
</evidence>
<evidence type="ECO:0000303" key="3">
    <source>
    </source>
</evidence>
<evidence type="ECO:0000305" key="4"/>
<evidence type="ECO:0000305" key="5">
    <source>
    </source>
</evidence>
<evidence type="ECO:0000312" key="6">
    <source>
        <dbReference type="FlyBase" id="FBgn0013432"/>
    </source>
</evidence>
<evidence type="ECO:0000312" key="7">
    <source>
        <dbReference type="Proteomes" id="UP000000803"/>
    </source>
</evidence>
<reference evidence="4" key="1">
    <citation type="journal article" date="2000" name="Science">
        <title>The genome sequence of Drosophila melanogaster.</title>
        <authorList>
            <person name="Adams M.D."/>
            <person name="Celniker S.E."/>
            <person name="Holt R.A."/>
            <person name="Evans C.A."/>
            <person name="Gocayne J.D."/>
            <person name="Amanatides P.G."/>
            <person name="Scherer S.E."/>
            <person name="Li P.W."/>
            <person name="Hoskins R.A."/>
            <person name="Galle R.F."/>
            <person name="George R.A."/>
            <person name="Lewis S.E."/>
            <person name="Richards S."/>
            <person name="Ashburner M."/>
            <person name="Henderson S.N."/>
            <person name="Sutton G.G."/>
            <person name="Wortman J.R."/>
            <person name="Yandell M.D."/>
            <person name="Zhang Q."/>
            <person name="Chen L.X."/>
            <person name="Brandon R.C."/>
            <person name="Rogers Y.-H.C."/>
            <person name="Blazej R.G."/>
            <person name="Champe M."/>
            <person name="Pfeiffer B.D."/>
            <person name="Wan K.H."/>
            <person name="Doyle C."/>
            <person name="Baxter E.G."/>
            <person name="Helt G."/>
            <person name="Nelson C.R."/>
            <person name="Miklos G.L.G."/>
            <person name="Abril J.F."/>
            <person name="Agbayani A."/>
            <person name="An H.-J."/>
            <person name="Andrews-Pfannkoch C."/>
            <person name="Baldwin D."/>
            <person name="Ballew R.M."/>
            <person name="Basu A."/>
            <person name="Baxendale J."/>
            <person name="Bayraktaroglu L."/>
            <person name="Beasley E.M."/>
            <person name="Beeson K.Y."/>
            <person name="Benos P.V."/>
            <person name="Berman B.P."/>
            <person name="Bhandari D."/>
            <person name="Bolshakov S."/>
            <person name="Borkova D."/>
            <person name="Botchan M.R."/>
            <person name="Bouck J."/>
            <person name="Brokstein P."/>
            <person name="Brottier P."/>
            <person name="Burtis K.C."/>
            <person name="Busam D.A."/>
            <person name="Butler H."/>
            <person name="Cadieu E."/>
            <person name="Center A."/>
            <person name="Chandra I."/>
            <person name="Cherry J.M."/>
            <person name="Cawley S."/>
            <person name="Dahlke C."/>
            <person name="Davenport L.B."/>
            <person name="Davies P."/>
            <person name="de Pablos B."/>
            <person name="Delcher A."/>
            <person name="Deng Z."/>
            <person name="Mays A.D."/>
            <person name="Dew I."/>
            <person name="Dietz S.M."/>
            <person name="Dodson K."/>
            <person name="Doup L.E."/>
            <person name="Downes M."/>
            <person name="Dugan-Rocha S."/>
            <person name="Dunkov B.C."/>
            <person name="Dunn P."/>
            <person name="Durbin K.J."/>
            <person name="Evangelista C.C."/>
            <person name="Ferraz C."/>
            <person name="Ferriera S."/>
            <person name="Fleischmann W."/>
            <person name="Fosler C."/>
            <person name="Gabrielian A.E."/>
            <person name="Garg N.S."/>
            <person name="Gelbart W.M."/>
            <person name="Glasser K."/>
            <person name="Glodek A."/>
            <person name="Gong F."/>
            <person name="Gorrell J.H."/>
            <person name="Gu Z."/>
            <person name="Guan P."/>
            <person name="Harris M."/>
            <person name="Harris N.L."/>
            <person name="Harvey D.A."/>
            <person name="Heiman T.J."/>
            <person name="Hernandez J.R."/>
            <person name="Houck J."/>
            <person name="Hostin D."/>
            <person name="Houston K.A."/>
            <person name="Howland T.J."/>
            <person name="Wei M.-H."/>
            <person name="Ibegwam C."/>
            <person name="Jalali M."/>
            <person name="Kalush F."/>
            <person name="Karpen G.H."/>
            <person name="Ke Z."/>
            <person name="Kennison J.A."/>
            <person name="Ketchum K.A."/>
            <person name="Kimmel B.E."/>
            <person name="Kodira C.D."/>
            <person name="Kraft C.L."/>
            <person name="Kravitz S."/>
            <person name="Kulp D."/>
            <person name="Lai Z."/>
            <person name="Lasko P."/>
            <person name="Lei Y."/>
            <person name="Levitsky A.A."/>
            <person name="Li J.H."/>
            <person name="Li Z."/>
            <person name="Liang Y."/>
            <person name="Lin X."/>
            <person name="Liu X."/>
            <person name="Mattei B."/>
            <person name="McIntosh T.C."/>
            <person name="McLeod M.P."/>
            <person name="McPherson D."/>
            <person name="Merkulov G."/>
            <person name="Milshina N.V."/>
            <person name="Mobarry C."/>
            <person name="Morris J."/>
            <person name="Moshrefi A."/>
            <person name="Mount S.M."/>
            <person name="Moy M."/>
            <person name="Murphy B."/>
            <person name="Murphy L."/>
            <person name="Muzny D.M."/>
            <person name="Nelson D.L."/>
            <person name="Nelson D.R."/>
            <person name="Nelson K.A."/>
            <person name="Nixon K."/>
            <person name="Nusskern D.R."/>
            <person name="Pacleb J.M."/>
            <person name="Palazzolo M."/>
            <person name="Pittman G.S."/>
            <person name="Pan S."/>
            <person name="Pollard J."/>
            <person name="Puri V."/>
            <person name="Reese M.G."/>
            <person name="Reinert K."/>
            <person name="Remington K."/>
            <person name="Saunders R.D.C."/>
            <person name="Scheeler F."/>
            <person name="Shen H."/>
            <person name="Shue B.C."/>
            <person name="Siden-Kiamos I."/>
            <person name="Simpson M."/>
            <person name="Skupski M.P."/>
            <person name="Smith T.J."/>
            <person name="Spier E."/>
            <person name="Spradling A.C."/>
            <person name="Stapleton M."/>
            <person name="Strong R."/>
            <person name="Sun E."/>
            <person name="Svirskas R."/>
            <person name="Tector C."/>
            <person name="Turner R."/>
            <person name="Venter E."/>
            <person name="Wang A.H."/>
            <person name="Wang X."/>
            <person name="Wang Z.-Y."/>
            <person name="Wassarman D.A."/>
            <person name="Weinstock G.M."/>
            <person name="Weissenbach J."/>
            <person name="Williams S.M."/>
            <person name="Woodage T."/>
            <person name="Worley K.C."/>
            <person name="Wu D."/>
            <person name="Yang S."/>
            <person name="Yao Q.A."/>
            <person name="Ye J."/>
            <person name="Yeh R.-F."/>
            <person name="Zaveri J.S."/>
            <person name="Zhan M."/>
            <person name="Zhang G."/>
            <person name="Zhao Q."/>
            <person name="Zheng L."/>
            <person name="Zheng X.H."/>
            <person name="Zhong F.N."/>
            <person name="Zhong W."/>
            <person name="Zhou X."/>
            <person name="Zhu S.C."/>
            <person name="Zhu X."/>
            <person name="Smith H.O."/>
            <person name="Gibbs R.A."/>
            <person name="Myers E.W."/>
            <person name="Rubin G.M."/>
            <person name="Venter J.C."/>
        </authorList>
    </citation>
    <scope>NUCLEOTIDE SEQUENCE [LARGE SCALE GENOMIC DNA]</scope>
    <source>
        <strain>Berkeley</strain>
    </source>
</reference>
<reference key="2">
    <citation type="journal article" date="2002" name="Genome Biol.">
        <title>Annotation of the Drosophila melanogaster euchromatic genome: a systematic review.</title>
        <authorList>
            <person name="Misra S."/>
            <person name="Crosby M.A."/>
            <person name="Mungall C.J."/>
            <person name="Matthews B.B."/>
            <person name="Campbell K.S."/>
            <person name="Hradecky P."/>
            <person name="Huang Y."/>
            <person name="Kaminker J.S."/>
            <person name="Millburn G.H."/>
            <person name="Prochnik S.E."/>
            <person name="Smith C.D."/>
            <person name="Tupy J.L."/>
            <person name="Whitfield E.J."/>
            <person name="Bayraktaroglu L."/>
            <person name="Berman B.P."/>
            <person name="Bettencourt B.R."/>
            <person name="Celniker S.E."/>
            <person name="de Grey A.D.N.J."/>
            <person name="Drysdale R.A."/>
            <person name="Harris N.L."/>
            <person name="Richter J."/>
            <person name="Russo S."/>
            <person name="Schroeder A.J."/>
            <person name="Shu S.Q."/>
            <person name="Stapleton M."/>
            <person name="Yamada C."/>
            <person name="Ashburner M."/>
            <person name="Gelbart W.M."/>
            <person name="Rubin G.M."/>
            <person name="Lewis S.E."/>
        </authorList>
    </citation>
    <scope>GENOME REANNOTATION</scope>
    <source>
        <strain>Berkeley</strain>
    </source>
</reference>
<reference evidence="4" key="3">
    <citation type="journal article" date="2000" name="Science">
        <title>From sequence to chromosome: the tip of the X chromosome of D. melanogaster.</title>
        <authorList>
            <person name="Benos P.V."/>
            <person name="Gatt M.K."/>
            <person name="Ashburner M."/>
            <person name="Murphy L."/>
            <person name="Harris D."/>
            <person name="Barrell B.G."/>
            <person name="Ferraz C."/>
            <person name="Vidal S."/>
            <person name="Brun C."/>
            <person name="Demailles J."/>
            <person name="Cadieu E."/>
            <person name="Dreano S."/>
            <person name="Gloux S."/>
            <person name="Lelaure V."/>
            <person name="Mottier S."/>
            <person name="Galibert F."/>
            <person name="Borkova D."/>
            <person name="Minana B."/>
            <person name="Kafatos F.C."/>
            <person name="Louis C."/>
            <person name="Siden-Kiamos I."/>
            <person name="Bolshakov S."/>
            <person name="Papagiannakis G."/>
            <person name="Spanos L."/>
            <person name="Cox S."/>
            <person name="Madueno E."/>
            <person name="de Pablos B."/>
            <person name="Modolell J."/>
            <person name="Peter A."/>
            <person name="Schoettler P."/>
            <person name="Werner M."/>
            <person name="Mourkioti F."/>
            <person name="Beinert N."/>
            <person name="Dowe G."/>
            <person name="Schaefer U."/>
            <person name="Jaeckle H."/>
            <person name="Bucheton A."/>
            <person name="Callister D.M."/>
            <person name="Campbell L.A."/>
            <person name="Darlamitsou A."/>
            <person name="Henderson N.S."/>
            <person name="McMillan P.J."/>
            <person name="Salles C."/>
            <person name="Tait E.A."/>
            <person name="Valenti P."/>
            <person name="Saunders R.D.C."/>
            <person name="Glover D.M."/>
        </authorList>
    </citation>
    <scope>NUCLEOTIDE SEQUENCE [LARGE SCALE GENOMIC DNA]</scope>
    <source>
        <strain>Oregon-R</strain>
    </source>
</reference>
<reference key="4">
    <citation type="journal article" date="2002" name="Genome Biol.">
        <title>A Drosophila full-length cDNA resource.</title>
        <authorList>
            <person name="Stapleton M."/>
            <person name="Carlson J.W."/>
            <person name="Brokstein P."/>
            <person name="Yu C."/>
            <person name="Champe M."/>
            <person name="George R.A."/>
            <person name="Guarin H."/>
            <person name="Kronmiller B."/>
            <person name="Pacleb J.M."/>
            <person name="Park S."/>
            <person name="Wan K.H."/>
            <person name="Rubin G.M."/>
            <person name="Celniker S.E."/>
        </authorList>
    </citation>
    <scope>NUCLEOTIDE SEQUENCE [LARGE SCALE MRNA]</scope>
    <source>
        <strain>Berkeley</strain>
        <tissue>Embryo</tissue>
    </source>
</reference>
<reference evidence="4" key="5">
    <citation type="journal article" date="1995" name="Genetics">
        <title>Molecular characterization of the breakpoints of an inversion fixed between Drosophila melanogaster and D. subobscura.</title>
        <authorList>
            <person name="Cirera S."/>
            <person name="Martin-Campos J.M."/>
            <person name="Segarra C."/>
            <person name="Aguade M."/>
        </authorList>
    </citation>
    <scope>NUCLEOTIDE SEQUENCE [GENOMIC DNA] OF 1-67</scope>
</reference>
<reference key="6">
    <citation type="journal article" date="2018" name="Front. Physiol.">
        <title>Iron Sulfur and Molybdenum Cofactor Enzymes Regulate the Drosophila Life Cycle by Controlling Cell Metabolism.</title>
        <authorList>
            <person name="Marelja Z."/>
            <person name="Leimkuehler S."/>
            <person name="Missirlis F."/>
        </authorList>
    </citation>
    <scope>FUNCTION</scope>
    <scope>INTERACTION WITH NFS1; ISCU AND FH</scope>
    <scope>SUBCELLULAR LOCATION</scope>
    <scope>DISRUPTION PHENOTYPE</scope>
</reference>
<proteinExistence type="evidence at protein level"/>
<gene>
    <name evidence="6" type="primary">bcn92</name>
    <name evidence="3 6" type="synonym">Isd11</name>
    <name evidence="6" type="ORF">CG3717</name>
</gene>
<keyword id="KW-0175">Coiled coil</keyword>
<keyword id="KW-0496">Mitochondrion</keyword>
<keyword id="KW-1185">Reference proteome</keyword>
<feature type="chain" id="PRO_0000174312" description="LYR motif-containing protein 4 homolog">
    <location>
        <begin position="1"/>
        <end position="92"/>
    </location>
</feature>
<feature type="coiled-coil region" evidence="1">
    <location>
        <begin position="48"/>
        <end position="68"/>
    </location>
</feature>
<dbReference type="EMBL" id="AE014298">
    <property type="protein sequence ID" value="AAF45733.1"/>
    <property type="molecule type" value="Genomic_DNA"/>
</dbReference>
<dbReference type="EMBL" id="Z98269">
    <property type="protein sequence ID" value="CAB10976.1"/>
    <property type="molecule type" value="Genomic_DNA"/>
</dbReference>
<dbReference type="EMBL" id="AY071542">
    <property type="protein sequence ID" value="AAL49164.1"/>
    <property type="molecule type" value="mRNA"/>
</dbReference>
<dbReference type="EMBL" id="Z46608">
    <property type="protein sequence ID" value="CAB56152.1"/>
    <property type="molecule type" value="Genomic_DNA"/>
</dbReference>
<dbReference type="PIR" id="T13609">
    <property type="entry name" value="T13609"/>
</dbReference>
<dbReference type="RefSeq" id="NP_477059.2">
    <property type="nucleotide sequence ID" value="NM_057711.3"/>
</dbReference>
<dbReference type="SMR" id="O46098"/>
<dbReference type="BioGRID" id="57727">
    <property type="interactions" value="4"/>
</dbReference>
<dbReference type="FunCoup" id="O46098">
    <property type="interactions" value="1962"/>
</dbReference>
<dbReference type="IntAct" id="O46098">
    <property type="interactions" value="3"/>
</dbReference>
<dbReference type="STRING" id="7227.FBpp0070415"/>
<dbReference type="PaxDb" id="7227-FBpp0070415"/>
<dbReference type="DNASU" id="31186"/>
<dbReference type="EnsemblMetazoa" id="FBtr0070431">
    <property type="protein sequence ID" value="FBpp0070415"/>
    <property type="gene ID" value="FBgn0013432"/>
</dbReference>
<dbReference type="GeneID" id="31186"/>
<dbReference type="KEGG" id="dme:Dmel_CG3717"/>
<dbReference type="UCSC" id="CG3717-RA">
    <property type="organism name" value="d. melanogaster"/>
</dbReference>
<dbReference type="AGR" id="FB:FBgn0013432"/>
<dbReference type="CTD" id="31186"/>
<dbReference type="FlyBase" id="FBgn0013432">
    <property type="gene designation" value="bcn92"/>
</dbReference>
<dbReference type="VEuPathDB" id="VectorBase:FBgn0013432"/>
<dbReference type="eggNOG" id="KOG3801">
    <property type="taxonomic scope" value="Eukaryota"/>
</dbReference>
<dbReference type="GeneTree" id="ENSGT00940000170978"/>
<dbReference type="HOGENOM" id="CLU_120076_3_1_1"/>
<dbReference type="InParanoid" id="O46098"/>
<dbReference type="OMA" id="YTTDKLV"/>
<dbReference type="OrthoDB" id="275715at2759"/>
<dbReference type="PhylomeDB" id="O46098"/>
<dbReference type="Reactome" id="R-DME-1362409">
    <property type="pathway name" value="Mitochondrial iron-sulfur cluster biogenesis"/>
</dbReference>
<dbReference type="Reactome" id="R-DME-9865881">
    <property type="pathway name" value="Complex III assembly"/>
</dbReference>
<dbReference type="SABIO-RK" id="O46098"/>
<dbReference type="BioGRID-ORCS" id="31186">
    <property type="hits" value="0 hits in 1 CRISPR screen"/>
</dbReference>
<dbReference type="GenomeRNAi" id="31186"/>
<dbReference type="PRO" id="PR:O46098"/>
<dbReference type="Proteomes" id="UP000000803">
    <property type="component" value="Chromosome X"/>
</dbReference>
<dbReference type="Bgee" id="FBgn0013432">
    <property type="expression patterns" value="Expressed in adult class III enteroendocrine cell in adult midgut (Drosophila) and 173 other cell types or tissues"/>
</dbReference>
<dbReference type="ExpressionAtlas" id="O46098">
    <property type="expression patterns" value="baseline and differential"/>
</dbReference>
<dbReference type="GO" id="GO:1990221">
    <property type="term" value="C:L-cysteine desulfurase complex"/>
    <property type="evidence" value="ECO:0000318"/>
    <property type="project" value="GO_Central"/>
</dbReference>
<dbReference type="GO" id="GO:0099128">
    <property type="term" value="C:mitochondrial [2Fe-2S] assembly complex"/>
    <property type="evidence" value="ECO:0000353"/>
    <property type="project" value="FlyBase"/>
</dbReference>
<dbReference type="GO" id="GO:0005759">
    <property type="term" value="C:mitochondrial matrix"/>
    <property type="evidence" value="ECO:0000305"/>
    <property type="project" value="FlyBase"/>
</dbReference>
<dbReference type="GO" id="GO:0005739">
    <property type="term" value="C:mitochondrion"/>
    <property type="evidence" value="ECO:0000314"/>
    <property type="project" value="FlyBase"/>
</dbReference>
<dbReference type="GO" id="GO:0005198">
    <property type="term" value="F:structural molecule activity"/>
    <property type="evidence" value="ECO:0000250"/>
    <property type="project" value="FlyBase"/>
</dbReference>
<dbReference type="GO" id="GO:0044571">
    <property type="term" value="P:[2Fe-2S] cluster assembly"/>
    <property type="evidence" value="ECO:0000314"/>
    <property type="project" value="FlyBase"/>
</dbReference>
<dbReference type="GO" id="GO:0016226">
    <property type="term" value="P:iron-sulfur cluster assembly"/>
    <property type="evidence" value="ECO:0000318"/>
    <property type="project" value="GO_Central"/>
</dbReference>
<dbReference type="CDD" id="cd20264">
    <property type="entry name" value="Complex1_LYR_LYRM4"/>
    <property type="match status" value="1"/>
</dbReference>
<dbReference type="InterPro" id="IPR008011">
    <property type="entry name" value="Complex1_LYR_dom"/>
</dbReference>
<dbReference type="InterPro" id="IPR045297">
    <property type="entry name" value="Complex1_LYR_LYRM4"/>
</dbReference>
<dbReference type="InterPro" id="IPR051522">
    <property type="entry name" value="ISC_assembly_LYR"/>
</dbReference>
<dbReference type="PANTHER" id="PTHR13166:SF7">
    <property type="entry name" value="LYR MOTIF-CONTAINING PROTEIN 4"/>
    <property type="match status" value="1"/>
</dbReference>
<dbReference type="PANTHER" id="PTHR13166">
    <property type="entry name" value="PROTEIN C6ORF149"/>
    <property type="match status" value="1"/>
</dbReference>
<dbReference type="Pfam" id="PF05347">
    <property type="entry name" value="Complex1_LYR"/>
    <property type="match status" value="1"/>
</dbReference>
<protein>
    <recommendedName>
        <fullName evidence="4">LYR motif-containing protein 4 homolog</fullName>
    </recommendedName>
    <alternativeName>
        <fullName evidence="6">Protein bcn92</fullName>
    </alternativeName>
</protein>
<accession>O46098</accession>
<accession>Q9U5X3</accession>